<gene>
    <name type="primary">TESC</name>
    <name type="synonym">CHP3</name>
</gene>
<feature type="initiator methionine" description="Removed" evidence="11 12">
    <location>
        <position position="1"/>
    </location>
</feature>
<feature type="chain" id="PRO_0000073859" description="Calcineurin B homologous protein 3">
    <location>
        <begin position="2"/>
        <end position="214"/>
    </location>
</feature>
<feature type="domain" description="EF-hand" evidence="3">
    <location>
        <begin position="110"/>
        <end position="145"/>
    </location>
</feature>
<feature type="region of interest" description="Disordered" evidence="4">
    <location>
        <begin position="1"/>
        <end position="20"/>
    </location>
</feature>
<feature type="compositionally biased region" description="Basic and acidic residues" evidence="4">
    <location>
        <begin position="7"/>
        <end position="16"/>
    </location>
</feature>
<feature type="binding site" evidence="3">
    <location>
        <position position="123"/>
    </location>
    <ligand>
        <name>Ca(2+)</name>
        <dbReference type="ChEBI" id="CHEBI:29108"/>
    </ligand>
</feature>
<feature type="binding site" evidence="3">
    <location>
        <position position="125"/>
    </location>
    <ligand>
        <name>Ca(2+)</name>
        <dbReference type="ChEBI" id="CHEBI:29108"/>
    </ligand>
</feature>
<feature type="binding site" evidence="3">
    <location>
        <position position="127"/>
    </location>
    <ligand>
        <name>Ca(2+)</name>
        <dbReference type="ChEBI" id="CHEBI:29108"/>
    </ligand>
</feature>
<feature type="binding site" evidence="3">
    <location>
        <position position="129"/>
    </location>
    <ligand>
        <name>Ca(2+)</name>
        <dbReference type="ChEBI" id="CHEBI:29108"/>
    </ligand>
</feature>
<feature type="binding site" evidence="3">
    <location>
        <position position="134"/>
    </location>
    <ligand>
        <name>Ca(2+)</name>
        <dbReference type="ChEBI" id="CHEBI:29108"/>
    </ligand>
</feature>
<feature type="lipid moiety-binding region" description="N-myristoyl glycine" evidence="7 11 12">
    <location>
        <position position="2"/>
    </location>
</feature>
<feature type="splice variant" id="VSP_045287" description="In isoform 3." evidence="15">
    <location>
        <begin position="43"/>
        <end position="69"/>
    </location>
</feature>
<feature type="splice variant" id="VSP_035518" description="In isoform 2." evidence="14">
    <original>VEELLSGNPHIEKESARSIADGAMM</original>
    <variation>KWSRSCCRETLTSRRSPLAPSPTGP</variation>
    <location>
        <begin position="139"/>
        <end position="163"/>
    </location>
</feature>
<feature type="splice variant" id="VSP_035519" description="In isoform 2." evidence="14">
    <location>
        <begin position="164"/>
        <end position="214"/>
    </location>
</feature>
<feature type="sequence conflict" description="In Ref. 5; BQ949772." evidence="16" ref="5">
    <original>TMA</original>
    <variation>NMG</variation>
    <location>
        <begin position="209"/>
        <end position="211"/>
    </location>
</feature>
<proteinExistence type="evidence at protein level"/>
<accession>Q96BS2</accession>
<accession>F5H1Y5</accession>
<accession>Q9NWT9</accession>
<protein>
    <recommendedName>
        <fullName>Calcineurin B homologous protein 3</fullName>
    </recommendedName>
    <alternativeName>
        <fullName>Tescalcin</fullName>
        <shortName>TSC</shortName>
    </alternativeName>
</protein>
<evidence type="ECO:0000250" key="1"/>
<evidence type="ECO:0000250" key="2">
    <source>
        <dbReference type="UniProtKB" id="Q9JKL5"/>
    </source>
</evidence>
<evidence type="ECO:0000255" key="3">
    <source>
        <dbReference type="PROSITE-ProRule" id="PRU00448"/>
    </source>
</evidence>
<evidence type="ECO:0000256" key="4">
    <source>
        <dbReference type="SAM" id="MobiDB-lite"/>
    </source>
</evidence>
<evidence type="ECO:0000269" key="5">
    <source>
    </source>
</evidence>
<evidence type="ECO:0000269" key="6">
    <source>
    </source>
</evidence>
<evidence type="ECO:0000269" key="7">
    <source>
    </source>
</evidence>
<evidence type="ECO:0000269" key="8">
    <source>
    </source>
</evidence>
<evidence type="ECO:0000269" key="9">
    <source>
    </source>
</evidence>
<evidence type="ECO:0000269" key="10">
    <source>
    </source>
</evidence>
<evidence type="ECO:0000269" key="11">
    <source>
    </source>
</evidence>
<evidence type="ECO:0000269" key="12">
    <source>
    </source>
</evidence>
<evidence type="ECO:0000269" key="13">
    <source>
    </source>
</evidence>
<evidence type="ECO:0000303" key="14">
    <source>
    </source>
</evidence>
<evidence type="ECO:0000303" key="15">
    <source>
    </source>
</evidence>
<evidence type="ECO:0000305" key="16"/>
<evidence type="ECO:0000305" key="17">
    <source>
    </source>
</evidence>
<comment type="function">
    <text evidence="8 9 10">Functions as an integral cofactor in cell pH regulation by controlling plasma membrane-type Na(+)/H(+) exchange activity. Promotes the maturation, transport, cell surface stability and exchange activity of SLC9A1/NHE1 at the plasma membrane. Promotes the induction of hematopoietic stem cell differentiation toward megakaryocytic lineage. Essential for the coupling of ERK cascade activation with the expression of ETS family genes in megakaryocytic differentiation. Also involved in granulocytic differentiation in a ERK-dependent manner. Inhibits the phosphatase activity of calcineurin.</text>
</comment>
<comment type="subunit">
    <text evidence="2 5 6 9 13">Monomer (By similarity). Homodimer; disulfide-linked (By similarity). Interacts with SLC9A1/NHE1; the interaction enables an optimal Na(+)/H(+) exchange activity (PubMed:11696366, PubMed:12809501, PubMed:18321853, PubMed:30287853).</text>
</comment>
<comment type="interaction">
    <interactant intactId="EBI-740653">
        <id>Q96BS2</id>
    </interactant>
    <interactant intactId="EBI-740641">
        <id>Q9NP66</id>
        <label>HMG20A</label>
    </interactant>
    <organismsDiffer>false</organismsDiffer>
    <experiments>2</experiments>
</comment>
<comment type="interaction">
    <interactant intactId="EBI-740653">
        <id>Q96BS2</id>
    </interactant>
    <interactant intactId="EBI-743635">
        <id>P19634</id>
        <label>SLC9A1</label>
    </interactant>
    <organismsDiffer>false</organismsDiffer>
    <experiments>4</experiments>
</comment>
<comment type="interaction">
    <interactant intactId="EBI-740653">
        <id>Q96BS2</id>
    </interactant>
    <interactant intactId="EBI-714455">
        <id>Q9Y2W2</id>
        <label>WBP11</label>
    </interactant>
    <organismsDiffer>false</organismsDiffer>
    <experiments>3</experiments>
</comment>
<comment type="subcellular location">
    <subcellularLocation>
        <location evidence="9">Nucleus</location>
    </subcellularLocation>
    <subcellularLocation>
        <location evidence="9">Cytoplasm</location>
    </subcellularLocation>
    <subcellularLocation>
        <location evidence="16">Membrane</location>
        <topology evidence="16">Lipid-anchor</topology>
    </subcellularLocation>
    <subcellularLocation>
        <location evidence="9">Cell membrane</location>
    </subcellularLocation>
    <subcellularLocation>
        <location evidence="5">Cell projection</location>
        <location evidence="5">Lamellipodium</location>
    </subcellularLocation>
    <subcellularLocation>
        <location evidence="2">Cell projection</location>
        <location evidence="2">Ruffle membrane</location>
    </subcellularLocation>
    <text evidence="9">Colocalizes with SLC9A1 at the plasma membrane.</text>
</comment>
<comment type="alternative products">
    <event type="alternative splicing"/>
    <isoform>
        <id>Q96BS2-1</id>
        <name>1</name>
        <sequence type="displayed"/>
    </isoform>
    <isoform>
        <id>Q96BS2-2</id>
        <name>2</name>
        <sequence type="described" ref="VSP_035518 VSP_035519"/>
    </isoform>
    <isoform>
        <id>Q96BS2-3</id>
        <name>3</name>
        <sequence type="described" ref="VSP_045287"/>
    </isoform>
</comment>
<comment type="tissue specificity">
    <text evidence="5 10">Expressed in mature megakaryocytes and polymorphonuclear granulocytes (at protein level). Abundantly expressed in heart. Also expressed at a lower level in adult testis and salivary gland, and in the placenta.</text>
</comment>
<comment type="developmental stage">
    <text evidence="8">Strongly up-regulated in K562 cells treated by PMA to promote megakaryocytic differentiation, but not when treated by DMSO to promote granulocytic differentiation or by hemin to promote erythroid differentiation (at protein level).</text>
</comment>
<comment type="induction">
    <text evidence="8 10">Up-regulated during granulocytic differentiation in a ERK-dependent manner (is mediated by activation of ERK) (at protein level). Up-regulated during the differentiation and maturation of primary megakaryocytes. Down-regulated during monocytic-macrophage differentiation in a ERK-dependent manner.</text>
</comment>
<comment type="domain">
    <text evidence="1">Binds calcium via its EF-hands. Calcium-binding mediates a conformational change. Can also bind magnesium (By similarity).</text>
</comment>
<comment type="similarity">
    <text evidence="16">Belongs to the calcineurin regulatory subunit family. CHP subfamily.</text>
</comment>
<comment type="caution">
    <text evidence="17">Although PubMed:12809501 reports that TESC results in a decrease in transporter activity of human SLC9A1, studies with rat SLC9A1 show that TESC-binding results in the maturation and accumulation of SLC9A1 at the cell surface.</text>
</comment>
<comment type="caution">
    <text evidence="5 6 9 13">The interacting region of SLC9A1/NHE1 with CHP3 is conflicting: Interaction with SLC9A1/NHE1 has been reported via residues 503-545, the juxtamembrane region of the cytoplasmic C-terminus (PubMed:11696366, PubMed:18321853, PubMed:30287853). However, another publication has reported interaction with SLC9A1/NHE1 via residues 633-815, the region of the cytoplasmic C-terminus more distal to the membrane (PubMed:12809501).</text>
</comment>
<comment type="sequence caution" evidence="16">
    <conflict type="erroneous initiation">
        <sequence resource="EMBL-CDS" id="BAA91288"/>
    </conflict>
    <text>Extended N-terminus.</text>
</comment>
<comment type="sequence caution" evidence="16">
    <conflict type="erroneous initiation">
        <sequence resource="EMBL-CDS" id="EAW98101"/>
    </conflict>
    <text>Extended N-terminus.</text>
</comment>
<name>CHP3_HUMAN</name>
<organism>
    <name type="scientific">Homo sapiens</name>
    <name type="common">Human</name>
    <dbReference type="NCBI Taxonomy" id="9606"/>
    <lineage>
        <taxon>Eukaryota</taxon>
        <taxon>Metazoa</taxon>
        <taxon>Chordata</taxon>
        <taxon>Craniata</taxon>
        <taxon>Vertebrata</taxon>
        <taxon>Euteleostomi</taxon>
        <taxon>Mammalia</taxon>
        <taxon>Eutheria</taxon>
        <taxon>Euarchontoglires</taxon>
        <taxon>Primates</taxon>
        <taxon>Haplorrhini</taxon>
        <taxon>Catarrhini</taxon>
        <taxon>Hominidae</taxon>
        <taxon>Homo</taxon>
    </lineage>
</organism>
<reference key="1">
    <citation type="journal article" date="2001" name="FEBS Lett.">
        <title>Human homolog of mouse tescalcin associates with Na(+)/H(+) exchanger type-1.</title>
        <authorList>
            <person name="Mailaender J."/>
            <person name="Mueller-Esterl W."/>
            <person name="Dedio J."/>
        </authorList>
    </citation>
    <scope>NUCLEOTIDE SEQUENCE [MRNA] (ISOFORM 1)</scope>
    <scope>INTERACTION WITH SLC9A1</scope>
    <scope>CALCIUM-BINDING</scope>
    <scope>SUBCELLULAR LOCATION</scope>
    <scope>TISSUE SPECIFICITY</scope>
</reference>
<reference key="2">
    <citation type="journal article" date="2004" name="Nat. Genet.">
        <title>Complete sequencing and characterization of 21,243 full-length human cDNAs.</title>
        <authorList>
            <person name="Ota T."/>
            <person name="Suzuki Y."/>
            <person name="Nishikawa T."/>
            <person name="Otsuki T."/>
            <person name="Sugiyama T."/>
            <person name="Irie R."/>
            <person name="Wakamatsu A."/>
            <person name="Hayashi K."/>
            <person name="Sato H."/>
            <person name="Nagai K."/>
            <person name="Kimura K."/>
            <person name="Makita H."/>
            <person name="Sekine M."/>
            <person name="Obayashi M."/>
            <person name="Nishi T."/>
            <person name="Shibahara T."/>
            <person name="Tanaka T."/>
            <person name="Ishii S."/>
            <person name="Yamamoto J."/>
            <person name="Saito K."/>
            <person name="Kawai Y."/>
            <person name="Isono Y."/>
            <person name="Nakamura Y."/>
            <person name="Nagahari K."/>
            <person name="Murakami K."/>
            <person name="Yasuda T."/>
            <person name="Iwayanagi T."/>
            <person name="Wagatsuma M."/>
            <person name="Shiratori A."/>
            <person name="Sudo H."/>
            <person name="Hosoiri T."/>
            <person name="Kaku Y."/>
            <person name="Kodaira H."/>
            <person name="Kondo H."/>
            <person name="Sugawara M."/>
            <person name="Takahashi M."/>
            <person name="Kanda K."/>
            <person name="Yokoi T."/>
            <person name="Furuya T."/>
            <person name="Kikkawa E."/>
            <person name="Omura Y."/>
            <person name="Abe K."/>
            <person name="Kamihara K."/>
            <person name="Katsuta N."/>
            <person name="Sato K."/>
            <person name="Tanikawa M."/>
            <person name="Yamazaki M."/>
            <person name="Ninomiya K."/>
            <person name="Ishibashi T."/>
            <person name="Yamashita H."/>
            <person name="Murakawa K."/>
            <person name="Fujimori K."/>
            <person name="Tanai H."/>
            <person name="Kimata M."/>
            <person name="Watanabe M."/>
            <person name="Hiraoka S."/>
            <person name="Chiba Y."/>
            <person name="Ishida S."/>
            <person name="Ono Y."/>
            <person name="Takiguchi S."/>
            <person name="Watanabe S."/>
            <person name="Yosida M."/>
            <person name="Hotuta T."/>
            <person name="Kusano J."/>
            <person name="Kanehori K."/>
            <person name="Takahashi-Fujii A."/>
            <person name="Hara H."/>
            <person name="Tanase T.-O."/>
            <person name="Nomura Y."/>
            <person name="Togiya S."/>
            <person name="Komai F."/>
            <person name="Hara R."/>
            <person name="Takeuchi K."/>
            <person name="Arita M."/>
            <person name="Imose N."/>
            <person name="Musashino K."/>
            <person name="Yuuki H."/>
            <person name="Oshima A."/>
            <person name="Sasaki N."/>
            <person name="Aotsuka S."/>
            <person name="Yoshikawa Y."/>
            <person name="Matsunawa H."/>
            <person name="Ichihara T."/>
            <person name="Shiohata N."/>
            <person name="Sano S."/>
            <person name="Moriya S."/>
            <person name="Momiyama H."/>
            <person name="Satoh N."/>
            <person name="Takami S."/>
            <person name="Terashima Y."/>
            <person name="Suzuki O."/>
            <person name="Nakagawa S."/>
            <person name="Senoh A."/>
            <person name="Mizoguchi H."/>
            <person name="Goto Y."/>
            <person name="Shimizu F."/>
            <person name="Wakebe H."/>
            <person name="Hishigaki H."/>
            <person name="Watanabe T."/>
            <person name="Sugiyama A."/>
            <person name="Takemoto M."/>
            <person name="Kawakami B."/>
            <person name="Yamazaki M."/>
            <person name="Watanabe K."/>
            <person name="Kumagai A."/>
            <person name="Itakura S."/>
            <person name="Fukuzumi Y."/>
            <person name="Fujimori Y."/>
            <person name="Komiyama M."/>
            <person name="Tashiro H."/>
            <person name="Tanigami A."/>
            <person name="Fujiwara T."/>
            <person name="Ono T."/>
            <person name="Yamada K."/>
            <person name="Fujii Y."/>
            <person name="Ozaki K."/>
            <person name="Hirao M."/>
            <person name="Ohmori Y."/>
            <person name="Kawabata A."/>
            <person name="Hikiji T."/>
            <person name="Kobatake N."/>
            <person name="Inagaki H."/>
            <person name="Ikema Y."/>
            <person name="Okamoto S."/>
            <person name="Okitani R."/>
            <person name="Kawakami T."/>
            <person name="Noguchi S."/>
            <person name="Itoh T."/>
            <person name="Shigeta K."/>
            <person name="Senba T."/>
            <person name="Matsumura K."/>
            <person name="Nakajima Y."/>
            <person name="Mizuno T."/>
            <person name="Morinaga M."/>
            <person name="Sasaki M."/>
            <person name="Togashi T."/>
            <person name="Oyama M."/>
            <person name="Hata H."/>
            <person name="Watanabe M."/>
            <person name="Komatsu T."/>
            <person name="Mizushima-Sugano J."/>
            <person name="Satoh T."/>
            <person name="Shirai Y."/>
            <person name="Takahashi Y."/>
            <person name="Nakagawa K."/>
            <person name="Okumura K."/>
            <person name="Nagase T."/>
            <person name="Nomura N."/>
            <person name="Kikuchi H."/>
            <person name="Masuho Y."/>
            <person name="Yamashita R."/>
            <person name="Nakai K."/>
            <person name="Yada T."/>
            <person name="Nakamura Y."/>
            <person name="Ohara O."/>
            <person name="Isogai T."/>
            <person name="Sugano S."/>
        </authorList>
    </citation>
    <scope>NUCLEOTIDE SEQUENCE [LARGE SCALE MRNA] (ISOFORM 2)</scope>
    <source>
        <tissue>Signet-ring cell carcinoma</tissue>
    </source>
</reference>
<reference key="3">
    <citation type="journal article" date="2006" name="Nature">
        <title>The finished DNA sequence of human chromosome 12.</title>
        <authorList>
            <person name="Scherer S.E."/>
            <person name="Muzny D.M."/>
            <person name="Buhay C.J."/>
            <person name="Chen R."/>
            <person name="Cree A."/>
            <person name="Ding Y."/>
            <person name="Dugan-Rocha S."/>
            <person name="Gill R."/>
            <person name="Gunaratne P."/>
            <person name="Harris R.A."/>
            <person name="Hawes A.C."/>
            <person name="Hernandez J."/>
            <person name="Hodgson A.V."/>
            <person name="Hume J."/>
            <person name="Jackson A."/>
            <person name="Khan Z.M."/>
            <person name="Kovar-Smith C."/>
            <person name="Lewis L.R."/>
            <person name="Lozado R.J."/>
            <person name="Metzker M.L."/>
            <person name="Milosavljevic A."/>
            <person name="Miner G.R."/>
            <person name="Montgomery K.T."/>
            <person name="Morgan M.B."/>
            <person name="Nazareth L.V."/>
            <person name="Scott G."/>
            <person name="Sodergren E."/>
            <person name="Song X.-Z."/>
            <person name="Steffen D."/>
            <person name="Lovering R.C."/>
            <person name="Wheeler D.A."/>
            <person name="Worley K.C."/>
            <person name="Yuan Y."/>
            <person name="Zhang Z."/>
            <person name="Adams C.Q."/>
            <person name="Ansari-Lari M.A."/>
            <person name="Ayele M."/>
            <person name="Brown M.J."/>
            <person name="Chen G."/>
            <person name="Chen Z."/>
            <person name="Clerc-Blankenburg K.P."/>
            <person name="Davis C."/>
            <person name="Delgado O."/>
            <person name="Dinh H.H."/>
            <person name="Draper H."/>
            <person name="Gonzalez-Garay M.L."/>
            <person name="Havlak P."/>
            <person name="Jackson L.R."/>
            <person name="Jacob L.S."/>
            <person name="Kelly S.H."/>
            <person name="Li L."/>
            <person name="Li Z."/>
            <person name="Liu J."/>
            <person name="Liu W."/>
            <person name="Lu J."/>
            <person name="Maheshwari M."/>
            <person name="Nguyen B.-V."/>
            <person name="Okwuonu G.O."/>
            <person name="Pasternak S."/>
            <person name="Perez L.M."/>
            <person name="Plopper F.J.H."/>
            <person name="Santibanez J."/>
            <person name="Shen H."/>
            <person name="Tabor P.E."/>
            <person name="Verduzco D."/>
            <person name="Waldron L."/>
            <person name="Wang Q."/>
            <person name="Williams G.A."/>
            <person name="Zhang J."/>
            <person name="Zhou J."/>
            <person name="Allen C.C."/>
            <person name="Amin A.G."/>
            <person name="Anyalebechi V."/>
            <person name="Bailey M."/>
            <person name="Barbaria J.A."/>
            <person name="Bimage K.E."/>
            <person name="Bryant N.P."/>
            <person name="Burch P.E."/>
            <person name="Burkett C.E."/>
            <person name="Burrell K.L."/>
            <person name="Calderon E."/>
            <person name="Cardenas V."/>
            <person name="Carter K."/>
            <person name="Casias K."/>
            <person name="Cavazos I."/>
            <person name="Cavazos S.R."/>
            <person name="Ceasar H."/>
            <person name="Chacko J."/>
            <person name="Chan S.N."/>
            <person name="Chavez D."/>
            <person name="Christopoulos C."/>
            <person name="Chu J."/>
            <person name="Cockrell R."/>
            <person name="Cox C.D."/>
            <person name="Dang M."/>
            <person name="Dathorne S.R."/>
            <person name="David R."/>
            <person name="Davis C.M."/>
            <person name="Davy-Carroll L."/>
            <person name="Deshazo D.R."/>
            <person name="Donlin J.E."/>
            <person name="D'Souza L."/>
            <person name="Eaves K.A."/>
            <person name="Egan A."/>
            <person name="Emery-Cohen A.J."/>
            <person name="Escotto M."/>
            <person name="Flagg N."/>
            <person name="Forbes L.D."/>
            <person name="Gabisi A.M."/>
            <person name="Garza M."/>
            <person name="Hamilton C."/>
            <person name="Henderson N."/>
            <person name="Hernandez O."/>
            <person name="Hines S."/>
            <person name="Hogues M.E."/>
            <person name="Huang M."/>
            <person name="Idlebird D.G."/>
            <person name="Johnson R."/>
            <person name="Jolivet A."/>
            <person name="Jones S."/>
            <person name="Kagan R."/>
            <person name="King L.M."/>
            <person name="Leal B."/>
            <person name="Lebow H."/>
            <person name="Lee S."/>
            <person name="LeVan J.M."/>
            <person name="Lewis L.C."/>
            <person name="London P."/>
            <person name="Lorensuhewa L.M."/>
            <person name="Loulseged H."/>
            <person name="Lovett D.A."/>
            <person name="Lucier A."/>
            <person name="Lucier R.L."/>
            <person name="Ma J."/>
            <person name="Madu R.C."/>
            <person name="Mapua P."/>
            <person name="Martindale A.D."/>
            <person name="Martinez E."/>
            <person name="Massey E."/>
            <person name="Mawhiney S."/>
            <person name="Meador M.G."/>
            <person name="Mendez S."/>
            <person name="Mercado C."/>
            <person name="Mercado I.C."/>
            <person name="Merritt C.E."/>
            <person name="Miner Z.L."/>
            <person name="Minja E."/>
            <person name="Mitchell T."/>
            <person name="Mohabbat F."/>
            <person name="Mohabbat K."/>
            <person name="Montgomery B."/>
            <person name="Moore N."/>
            <person name="Morris S."/>
            <person name="Munidasa M."/>
            <person name="Ngo R.N."/>
            <person name="Nguyen N.B."/>
            <person name="Nickerson E."/>
            <person name="Nwaokelemeh O.O."/>
            <person name="Nwokenkwo S."/>
            <person name="Obregon M."/>
            <person name="Oguh M."/>
            <person name="Oragunye N."/>
            <person name="Oviedo R.J."/>
            <person name="Parish B.J."/>
            <person name="Parker D.N."/>
            <person name="Parrish J."/>
            <person name="Parks K.L."/>
            <person name="Paul H.A."/>
            <person name="Payton B.A."/>
            <person name="Perez A."/>
            <person name="Perrin W."/>
            <person name="Pickens A."/>
            <person name="Primus E.L."/>
            <person name="Pu L.-L."/>
            <person name="Puazo M."/>
            <person name="Quiles M.M."/>
            <person name="Quiroz J.B."/>
            <person name="Rabata D."/>
            <person name="Reeves K."/>
            <person name="Ruiz S.J."/>
            <person name="Shao H."/>
            <person name="Sisson I."/>
            <person name="Sonaike T."/>
            <person name="Sorelle R.P."/>
            <person name="Sutton A.E."/>
            <person name="Svatek A.F."/>
            <person name="Svetz L.A."/>
            <person name="Tamerisa K.S."/>
            <person name="Taylor T.R."/>
            <person name="Teague B."/>
            <person name="Thomas N."/>
            <person name="Thorn R.D."/>
            <person name="Trejos Z.Y."/>
            <person name="Trevino B.K."/>
            <person name="Ukegbu O.N."/>
            <person name="Urban J.B."/>
            <person name="Vasquez L.I."/>
            <person name="Vera V.A."/>
            <person name="Villasana D.M."/>
            <person name="Wang L."/>
            <person name="Ward-Moore S."/>
            <person name="Warren J.T."/>
            <person name="Wei X."/>
            <person name="White F."/>
            <person name="Williamson A.L."/>
            <person name="Wleczyk R."/>
            <person name="Wooden H.S."/>
            <person name="Wooden S.H."/>
            <person name="Yen J."/>
            <person name="Yoon L."/>
            <person name="Yoon V."/>
            <person name="Zorrilla S.E."/>
            <person name="Nelson D."/>
            <person name="Kucherlapati R."/>
            <person name="Weinstock G."/>
            <person name="Gibbs R.A."/>
        </authorList>
    </citation>
    <scope>NUCLEOTIDE SEQUENCE [LARGE SCALE GENOMIC DNA]</scope>
</reference>
<reference key="4">
    <citation type="submission" date="2007-07" db="EMBL/GenBank/DDBJ databases">
        <authorList>
            <person name="Mural R.J."/>
            <person name="Istrail S."/>
            <person name="Sutton G.G."/>
            <person name="Florea L."/>
            <person name="Halpern A.L."/>
            <person name="Mobarry C.M."/>
            <person name="Lippert R."/>
            <person name="Walenz B."/>
            <person name="Shatkay H."/>
            <person name="Dew I."/>
            <person name="Miller J.R."/>
            <person name="Flanigan M.J."/>
            <person name="Edwards N.J."/>
            <person name="Bolanos R."/>
            <person name="Fasulo D."/>
            <person name="Halldorsson B.V."/>
            <person name="Hannenhalli S."/>
            <person name="Turner R."/>
            <person name="Yooseph S."/>
            <person name="Lu F."/>
            <person name="Nusskern D.R."/>
            <person name="Shue B.C."/>
            <person name="Zheng X.H."/>
            <person name="Zhong F."/>
            <person name="Delcher A.L."/>
            <person name="Huson D.H."/>
            <person name="Kravitz S.A."/>
            <person name="Mouchard L."/>
            <person name="Reinert K."/>
            <person name="Remington K.A."/>
            <person name="Clark A.G."/>
            <person name="Waterman M.S."/>
            <person name="Eichler E.E."/>
            <person name="Adams M.D."/>
            <person name="Hunkapiller M.W."/>
            <person name="Myers E.W."/>
            <person name="Venter J.C."/>
        </authorList>
    </citation>
    <scope>NUCLEOTIDE SEQUENCE [LARGE SCALE GENOMIC DNA]</scope>
</reference>
<reference key="5">
    <citation type="journal article" date="2004" name="Genome Res.">
        <title>The status, quality, and expansion of the NIH full-length cDNA project: the Mammalian Gene Collection (MGC).</title>
        <authorList>
            <consortium name="The MGC Project Team"/>
        </authorList>
    </citation>
    <scope>NUCLEOTIDE SEQUENCE [LARGE SCALE MRNA] (ISOFORMS 1 AND 3)</scope>
</reference>
<reference key="6">
    <citation type="journal article" date="2003" name="Biochemistry">
        <title>The Na+/H+ exchanger cytoplasmic tail: structure, function, and interactions with tescalcin.</title>
        <authorList>
            <person name="Li X."/>
            <person name="Liu Y."/>
            <person name="Kay C.M."/>
            <person name="Muller-Esterl W."/>
            <person name="Fliegel L."/>
        </authorList>
    </citation>
    <scope>INTERACTION WITH SLC9A1</scope>
</reference>
<reference key="7">
    <citation type="journal article" date="2003" name="Biochemistry">
        <title>Characterization of tescalcin, a novel EF-hand protein with a single Ca2+-binding site: metal-binding properties, localization in tissues and cells, and effect on calcineurin.</title>
        <authorList>
            <person name="Gutierrez-Ford C."/>
            <person name="Levay K."/>
            <person name="Gomes A.V."/>
            <person name="Perera E.M."/>
            <person name="Som T."/>
            <person name="Kim Y.M."/>
            <person name="Benovic J.L."/>
            <person name="Berkovitz G.D."/>
            <person name="Slepak V.Z."/>
        </authorList>
    </citation>
    <scope>MYRISTOYLATION AT GLY-2</scope>
</reference>
<reference key="8">
    <citation type="journal article" date="2007" name="J. Clin. Invest.">
        <title>Tescalcin is an essential factor in megakaryocytic differentiation associated with Ets family gene expression.</title>
        <authorList>
            <person name="Levay K."/>
            <person name="Slepak V.Z."/>
        </authorList>
    </citation>
    <scope>FUNCTION IN MEGAKARYOCYTIC DIFFERENTIATION</scope>
    <scope>INDUCTION</scope>
    <scope>DEVELOPMENTAL STAGE</scope>
</reference>
<reference key="9">
    <citation type="journal article" date="2008" name="J. Biol. Chem.">
        <title>Calcineurin B homologous protein 3 promotes the biosynthetic maturation, cell surface stability, and optimal transport of the Na+/H+ exchanger NHE1 isoform.</title>
        <authorList>
            <person name="Zaun H.C."/>
            <person name="Shrier A."/>
            <person name="Orlowski J."/>
        </authorList>
    </citation>
    <scope>FUNCTION</scope>
    <scope>INTERACTION WITH SLC9A1</scope>
    <scope>SUBCELLULAR LOCATION</scope>
</reference>
<reference key="10">
    <citation type="journal article" date="2010" name="Exp. Cell Res.">
        <title>Up- or downregulation of tescalcin in HL-60 cells is associated with their differentiation to either granulocytic or macrophage-like lineage.</title>
        <authorList>
            <person name="Levay K."/>
            <person name="Slepak V.Z."/>
        </authorList>
    </citation>
    <scope>FUNCTION IN GRANULOCYTIC DIFFERENTIATION</scope>
    <scope>INDUCTION</scope>
    <scope>TISSUE SPECIFICITY</scope>
</reference>
<reference key="11">
    <citation type="journal article" date="2011" name="BMC Syst. Biol.">
        <title>Initial characterization of the human central proteome.</title>
        <authorList>
            <person name="Burkard T.R."/>
            <person name="Planyavsky M."/>
            <person name="Kaupe I."/>
            <person name="Breitwieser F.P."/>
            <person name="Buerckstuemmer T."/>
            <person name="Bennett K.L."/>
            <person name="Superti-Furga G."/>
            <person name="Colinge J."/>
        </authorList>
    </citation>
    <scope>IDENTIFICATION BY MASS SPECTROMETRY [LARGE SCALE ANALYSIS]</scope>
</reference>
<reference key="12">
    <citation type="journal article" date="2014" name="Nat. Commun.">
        <title>Global profiling of co- and post-translationally N-myristoylated proteomes in human cells.</title>
        <authorList>
            <person name="Thinon E."/>
            <person name="Serwa R.A."/>
            <person name="Broncel M."/>
            <person name="Brannigan J.A."/>
            <person name="Brassat U."/>
            <person name="Wright M.H."/>
            <person name="Heal W.P."/>
            <person name="Wilkinson A.J."/>
            <person name="Mann D.J."/>
            <person name="Tate E.W."/>
        </authorList>
    </citation>
    <scope>MYRISTOYLATION AT GLY-2</scope>
    <scope>CLEAVAGE OF INITIATOR METHIONINE</scope>
    <scope>IDENTIFICATION BY MASS SPECTROMETRY</scope>
</reference>
<reference key="13">
    <citation type="journal article" date="2015" name="Angew. Chem. Int. Ed.">
        <title>Multifunctional reagents for quantitative proteome-wide analysis of protein modification in human cells and dynamic profiling of protein lipidation during vertebrate development.</title>
        <authorList>
            <person name="Broncel M."/>
            <person name="Serwa R.A."/>
            <person name="Ciepla P."/>
            <person name="Krause E."/>
            <person name="Dallman M.J."/>
            <person name="Magee A.I."/>
            <person name="Tate E.W."/>
        </authorList>
    </citation>
    <scope>MYRISTOYLATION AT GLY-2</scope>
    <scope>CLEAVAGE OF INITIATOR METHIONINE</scope>
    <scope>IDENTIFICATION BY MASS SPECTROMETRY</scope>
</reference>
<reference key="14">
    <citation type="journal article" date="2015" name="Proteomics">
        <title>N-terminome analysis of the human mitochondrial proteome.</title>
        <authorList>
            <person name="Vaca Jacome A.S."/>
            <person name="Rabilloud T."/>
            <person name="Schaeffer-Reiss C."/>
            <person name="Rompais M."/>
            <person name="Ayoub D."/>
            <person name="Lane L."/>
            <person name="Bairoch A."/>
            <person name="Van Dorsselaer A."/>
            <person name="Carapito C."/>
        </authorList>
    </citation>
    <scope>IDENTIFICATION BY MASS SPECTROMETRY [LARGE SCALE ANALYSIS]</scope>
</reference>
<reference key="15">
    <citation type="journal article" date="2018" name="Sci. Rep.">
        <title>Calcineurin B homologous protein 3 binds with high affinity to the CHP binding domain of the human sodium/proton exchanger NHE1.</title>
        <authorList>
            <person name="Fuchs S."/>
            <person name="Hansen S.C."/>
            <person name="Markones M."/>
            <person name="Mymrikov E.V."/>
            <person name="Heerklotz H."/>
            <person name="Hunte C."/>
        </authorList>
    </citation>
    <scope>INTERACTION WITH SLC9A1</scope>
</reference>
<dbReference type="EMBL" id="AF443207">
    <property type="protein sequence ID" value="AAL35615.1"/>
    <property type="molecule type" value="mRNA"/>
</dbReference>
<dbReference type="EMBL" id="AK000614">
    <property type="protein sequence ID" value="BAA91288.1"/>
    <property type="status" value="ALT_INIT"/>
    <property type="molecule type" value="mRNA"/>
</dbReference>
<dbReference type="EMBL" id="AC026368">
    <property type="status" value="NOT_ANNOTATED_CDS"/>
    <property type="molecule type" value="Genomic_DNA"/>
</dbReference>
<dbReference type="EMBL" id="CH471054">
    <property type="protein sequence ID" value="EAW98101.1"/>
    <property type="status" value="ALT_INIT"/>
    <property type="molecule type" value="Genomic_DNA"/>
</dbReference>
<dbReference type="EMBL" id="BC015221">
    <property type="protein sequence ID" value="AAH15221.1"/>
    <property type="molecule type" value="mRNA"/>
</dbReference>
<dbReference type="EMBL" id="BQ949772">
    <property type="status" value="NOT_ANNOTATED_CDS"/>
    <property type="molecule type" value="mRNA"/>
</dbReference>
<dbReference type="CCDS" id="CCDS53835.1">
    <molecule id="Q96BS2-3"/>
</dbReference>
<dbReference type="CCDS" id="CCDS9183.3">
    <molecule id="Q96BS2-1"/>
</dbReference>
<dbReference type="RefSeq" id="NP_001161797.1">
    <molecule id="Q96BS2-3"/>
    <property type="nucleotide sequence ID" value="NM_001168325.2"/>
</dbReference>
<dbReference type="RefSeq" id="NP_060369.3">
    <molecule id="Q96BS2-1"/>
    <property type="nucleotide sequence ID" value="NM_017899.4"/>
</dbReference>
<dbReference type="RefSeq" id="XP_016875022.1">
    <property type="nucleotide sequence ID" value="XM_017019533.1"/>
</dbReference>
<dbReference type="SMR" id="Q96BS2"/>
<dbReference type="BioGRID" id="120330">
    <property type="interactions" value="10"/>
</dbReference>
<dbReference type="FunCoup" id="Q96BS2">
    <property type="interactions" value="470"/>
</dbReference>
<dbReference type="IntAct" id="Q96BS2">
    <property type="interactions" value="22"/>
</dbReference>
<dbReference type="MINT" id="Q96BS2"/>
<dbReference type="STRING" id="9606.ENSP00000334785"/>
<dbReference type="iPTMnet" id="Q96BS2"/>
<dbReference type="PhosphoSitePlus" id="Q96BS2"/>
<dbReference type="SwissPalm" id="Q96BS2"/>
<dbReference type="BioMuta" id="TESC"/>
<dbReference type="DMDM" id="284018160"/>
<dbReference type="jPOST" id="Q96BS2"/>
<dbReference type="MassIVE" id="Q96BS2"/>
<dbReference type="PaxDb" id="9606-ENSP00000334785"/>
<dbReference type="PeptideAtlas" id="Q96BS2"/>
<dbReference type="ProteomicsDB" id="25797"/>
<dbReference type="ProteomicsDB" id="76106">
    <molecule id="Q96BS2-1"/>
</dbReference>
<dbReference type="ProteomicsDB" id="76107">
    <molecule id="Q96BS2-2"/>
</dbReference>
<dbReference type="Pumba" id="Q96BS2"/>
<dbReference type="Antibodypedia" id="45432">
    <property type="antibodies" value="172 antibodies from 24 providers"/>
</dbReference>
<dbReference type="DNASU" id="54997"/>
<dbReference type="Ensembl" id="ENST00000335209.12">
    <molecule id="Q96BS2-1"/>
    <property type="protein sequence ID" value="ENSP00000334785.7"/>
    <property type="gene ID" value="ENSG00000088992.18"/>
</dbReference>
<dbReference type="Ensembl" id="ENST00000470612.5">
    <molecule id="Q96BS2-2"/>
    <property type="protein sequence ID" value="ENSP00000432716.1"/>
    <property type="gene ID" value="ENSG00000088992.18"/>
</dbReference>
<dbReference type="Ensembl" id="ENST00000541210.5">
    <molecule id="Q96BS2-3"/>
    <property type="protein sequence ID" value="ENSP00000445689.1"/>
    <property type="gene ID" value="ENSG00000088992.18"/>
</dbReference>
<dbReference type="GeneID" id="54997"/>
<dbReference type="KEGG" id="hsa:54997"/>
<dbReference type="MANE-Select" id="ENST00000335209.12">
    <property type="protein sequence ID" value="ENSP00000334785.7"/>
    <property type="RefSeq nucleotide sequence ID" value="NM_017899.4"/>
    <property type="RefSeq protein sequence ID" value="NP_060369.3"/>
</dbReference>
<dbReference type="UCSC" id="uc001twh.4">
    <molecule id="Q96BS2-1"/>
    <property type="organism name" value="human"/>
</dbReference>
<dbReference type="AGR" id="HGNC:26065"/>
<dbReference type="CTD" id="54997"/>
<dbReference type="DisGeNET" id="54997"/>
<dbReference type="GeneCards" id="TESC"/>
<dbReference type="HGNC" id="HGNC:26065">
    <property type="gene designation" value="TESC"/>
</dbReference>
<dbReference type="HPA" id="ENSG00000088992">
    <property type="expression patterns" value="Tissue enhanced (salivary)"/>
</dbReference>
<dbReference type="MIM" id="611585">
    <property type="type" value="gene"/>
</dbReference>
<dbReference type="neXtProt" id="NX_Q96BS2"/>
<dbReference type="OpenTargets" id="ENSG00000088992"/>
<dbReference type="PharmGKB" id="PA143485630"/>
<dbReference type="VEuPathDB" id="HostDB:ENSG00000088992"/>
<dbReference type="eggNOG" id="KOG0034">
    <property type="taxonomic scope" value="Eukaryota"/>
</dbReference>
<dbReference type="GeneTree" id="ENSGT00940000155845"/>
<dbReference type="HOGENOM" id="CLU_112076_0_0_1"/>
<dbReference type="InParanoid" id="Q96BS2"/>
<dbReference type="OMA" id="TMEPIAM"/>
<dbReference type="OrthoDB" id="191686at2759"/>
<dbReference type="PAN-GO" id="Q96BS2">
    <property type="GO annotations" value="9 GO annotations based on evolutionary models"/>
</dbReference>
<dbReference type="PhylomeDB" id="Q96BS2"/>
<dbReference type="TreeFam" id="TF354284"/>
<dbReference type="PathwayCommons" id="Q96BS2"/>
<dbReference type="SignaLink" id="Q96BS2"/>
<dbReference type="BioGRID-ORCS" id="54997">
    <property type="hits" value="12 hits in 1153 CRISPR screens"/>
</dbReference>
<dbReference type="ChiTaRS" id="TESC">
    <property type="organism name" value="human"/>
</dbReference>
<dbReference type="GenomeRNAi" id="54997"/>
<dbReference type="Pharos" id="Q96BS2">
    <property type="development level" value="Tbio"/>
</dbReference>
<dbReference type="PRO" id="PR:Q96BS2"/>
<dbReference type="Proteomes" id="UP000005640">
    <property type="component" value="Chromosome 12"/>
</dbReference>
<dbReference type="RNAct" id="Q96BS2">
    <property type="molecule type" value="protein"/>
</dbReference>
<dbReference type="Bgee" id="ENSG00000088992">
    <property type="expression patterns" value="Expressed in parotid gland and 152 other cell types or tissues"/>
</dbReference>
<dbReference type="ExpressionAtlas" id="Q96BS2">
    <property type="expression patterns" value="baseline and differential"/>
</dbReference>
<dbReference type="GO" id="GO:0005737">
    <property type="term" value="C:cytoplasm"/>
    <property type="evidence" value="ECO:0000314"/>
    <property type="project" value="UniProtKB"/>
</dbReference>
<dbReference type="GO" id="GO:0005829">
    <property type="term" value="C:cytosol"/>
    <property type="evidence" value="ECO:0000314"/>
    <property type="project" value="HPA"/>
</dbReference>
<dbReference type="GO" id="GO:0030027">
    <property type="term" value="C:lamellipodium"/>
    <property type="evidence" value="ECO:0000314"/>
    <property type="project" value="UniProtKB"/>
</dbReference>
<dbReference type="GO" id="GO:0005654">
    <property type="term" value="C:nucleoplasm"/>
    <property type="evidence" value="ECO:0000314"/>
    <property type="project" value="HPA"/>
</dbReference>
<dbReference type="GO" id="GO:0005634">
    <property type="term" value="C:nucleus"/>
    <property type="evidence" value="ECO:0000314"/>
    <property type="project" value="UniProtKB"/>
</dbReference>
<dbReference type="GO" id="GO:0005886">
    <property type="term" value="C:plasma membrane"/>
    <property type="evidence" value="ECO:0000314"/>
    <property type="project" value="UniProtKB"/>
</dbReference>
<dbReference type="GO" id="GO:0001726">
    <property type="term" value="C:ruffle"/>
    <property type="evidence" value="ECO:0000250"/>
    <property type="project" value="UniProtKB"/>
</dbReference>
<dbReference type="GO" id="GO:0032587">
    <property type="term" value="C:ruffle membrane"/>
    <property type="evidence" value="ECO:0007669"/>
    <property type="project" value="UniProtKB-SubCell"/>
</dbReference>
<dbReference type="GO" id="GO:0005509">
    <property type="term" value="F:calcium ion binding"/>
    <property type="evidence" value="ECO:0000314"/>
    <property type="project" value="UniProtKB"/>
</dbReference>
<dbReference type="GO" id="GO:0000287">
    <property type="term" value="F:magnesium ion binding"/>
    <property type="evidence" value="ECO:0000250"/>
    <property type="project" value="UniProtKB"/>
</dbReference>
<dbReference type="GO" id="GO:0019212">
    <property type="term" value="F:phosphatase inhibitor activity"/>
    <property type="evidence" value="ECO:0000250"/>
    <property type="project" value="UniProtKB"/>
</dbReference>
<dbReference type="GO" id="GO:0042803">
    <property type="term" value="F:protein homodimerization activity"/>
    <property type="evidence" value="ECO:0000250"/>
    <property type="project" value="UniProtKB"/>
</dbReference>
<dbReference type="GO" id="GO:0004860">
    <property type="term" value="F:protein kinase inhibitor activity"/>
    <property type="evidence" value="ECO:0007669"/>
    <property type="project" value="UniProtKB-KW"/>
</dbReference>
<dbReference type="GO" id="GO:0071300">
    <property type="term" value="P:cellular response to retinoic acid"/>
    <property type="evidence" value="ECO:0000314"/>
    <property type="project" value="UniProtKB"/>
</dbReference>
<dbReference type="GO" id="GO:0008584">
    <property type="term" value="P:male gonad development"/>
    <property type="evidence" value="ECO:0007669"/>
    <property type="project" value="Ensembl"/>
</dbReference>
<dbReference type="GO" id="GO:0030219">
    <property type="term" value="P:megakaryocyte differentiation"/>
    <property type="evidence" value="ECO:0007669"/>
    <property type="project" value="Ensembl"/>
</dbReference>
<dbReference type="GO" id="GO:0008285">
    <property type="term" value="P:negative regulation of cell population proliferation"/>
    <property type="evidence" value="ECO:0000315"/>
    <property type="project" value="UniProtKB"/>
</dbReference>
<dbReference type="GO" id="GO:0045893">
    <property type="term" value="P:positive regulation of DNA-templated transcription"/>
    <property type="evidence" value="ECO:0000315"/>
    <property type="project" value="UniProtKB"/>
</dbReference>
<dbReference type="GO" id="GO:0010628">
    <property type="term" value="P:positive regulation of gene expression"/>
    <property type="evidence" value="ECO:0000315"/>
    <property type="project" value="UniProtKB"/>
</dbReference>
<dbReference type="GO" id="GO:0030854">
    <property type="term" value="P:positive regulation of granulocyte differentiation"/>
    <property type="evidence" value="ECO:0000314"/>
    <property type="project" value="UniProtKB"/>
</dbReference>
<dbReference type="GO" id="GO:0045654">
    <property type="term" value="P:positive regulation of megakaryocyte differentiation"/>
    <property type="evidence" value="ECO:0000315"/>
    <property type="project" value="UniProtKB"/>
</dbReference>
<dbReference type="GO" id="GO:0032417">
    <property type="term" value="P:positive regulation of sodium:proton antiporter activity"/>
    <property type="evidence" value="ECO:0000314"/>
    <property type="project" value="UniProtKB"/>
</dbReference>
<dbReference type="GO" id="GO:0072659">
    <property type="term" value="P:protein localization to plasma membrane"/>
    <property type="evidence" value="ECO:0000314"/>
    <property type="project" value="UniProtKB"/>
</dbReference>
<dbReference type="GO" id="GO:0051604">
    <property type="term" value="P:protein maturation"/>
    <property type="evidence" value="ECO:0000314"/>
    <property type="project" value="UniProtKB"/>
</dbReference>
<dbReference type="GO" id="GO:0050821">
    <property type="term" value="P:protein stabilization"/>
    <property type="evidence" value="ECO:0000314"/>
    <property type="project" value="UniProtKB"/>
</dbReference>
<dbReference type="GO" id="GO:0015031">
    <property type="term" value="P:protein transport"/>
    <property type="evidence" value="ECO:0007669"/>
    <property type="project" value="UniProtKB-KW"/>
</dbReference>
<dbReference type="GO" id="GO:0033628">
    <property type="term" value="P:regulation of cell adhesion mediated by integrin"/>
    <property type="evidence" value="ECO:0000315"/>
    <property type="project" value="UniProtKB"/>
</dbReference>
<dbReference type="FunFam" id="1.10.238.10:FF:000205">
    <property type="entry name" value="calcineurin B homologous protein 3"/>
    <property type="match status" value="1"/>
</dbReference>
<dbReference type="Gene3D" id="1.10.238.10">
    <property type="entry name" value="EF-hand"/>
    <property type="match status" value="1"/>
</dbReference>
<dbReference type="InterPro" id="IPR052490">
    <property type="entry name" value="CHP3"/>
</dbReference>
<dbReference type="InterPro" id="IPR011992">
    <property type="entry name" value="EF-hand-dom_pair"/>
</dbReference>
<dbReference type="InterPro" id="IPR018247">
    <property type="entry name" value="EF_Hand_1_Ca_BS"/>
</dbReference>
<dbReference type="InterPro" id="IPR002048">
    <property type="entry name" value="EF_hand_dom"/>
</dbReference>
<dbReference type="PANTHER" id="PTHR46823">
    <property type="entry name" value="CALCINEURIN B HOMOLOGOUS PROTEIN 3"/>
    <property type="match status" value="1"/>
</dbReference>
<dbReference type="Pfam" id="PF13405">
    <property type="entry name" value="EF-hand_6"/>
    <property type="match status" value="1"/>
</dbReference>
<dbReference type="SMART" id="SM00054">
    <property type="entry name" value="EFh"/>
    <property type="match status" value="1"/>
</dbReference>
<dbReference type="SUPFAM" id="SSF47473">
    <property type="entry name" value="EF-hand"/>
    <property type="match status" value="1"/>
</dbReference>
<dbReference type="PROSITE" id="PS00018">
    <property type="entry name" value="EF_HAND_1"/>
    <property type="match status" value="1"/>
</dbReference>
<dbReference type="PROSITE" id="PS50222">
    <property type="entry name" value="EF_HAND_2"/>
    <property type="match status" value="1"/>
</dbReference>
<keyword id="KW-0025">Alternative splicing</keyword>
<keyword id="KW-0106">Calcium</keyword>
<keyword id="KW-1003">Cell membrane</keyword>
<keyword id="KW-0966">Cell projection</keyword>
<keyword id="KW-0963">Cytoplasm</keyword>
<keyword id="KW-0221">Differentiation</keyword>
<keyword id="KW-1015">Disulfide bond</keyword>
<keyword id="KW-0449">Lipoprotein</keyword>
<keyword id="KW-0472">Membrane</keyword>
<keyword id="KW-0479">Metal-binding</keyword>
<keyword id="KW-0519">Myristate</keyword>
<keyword id="KW-0539">Nucleus</keyword>
<keyword id="KW-0649">Protein kinase inhibitor</keyword>
<keyword id="KW-0653">Protein transport</keyword>
<keyword id="KW-1267">Proteomics identification</keyword>
<keyword id="KW-1185">Reference proteome</keyword>
<keyword id="KW-0813">Transport</keyword>
<sequence>MGAAHSASEEVRELEGKTGFSSDQIEQLHRRFKQLSGDQPTIRKENFNNVPDLELNPIRSKIVRAFFDNRNLRKGPSGLADEINFEDFLTIMSYFRPIDTTMDEEQVELSRKEKLRFLFHMYDSDSDGRITLEEYRNVVEELLSGNPHIEKESARSIADGAMMEAASVCMGQMEPDQVYEGITFEDFLKIWQGIDIETKMHVRFLNMETMALCH</sequence>